<dbReference type="EC" id="3.1.1.31" evidence="1"/>
<dbReference type="EMBL" id="AM286415">
    <property type="protein sequence ID" value="CAL12947.1"/>
    <property type="molecule type" value="Genomic_DNA"/>
</dbReference>
<dbReference type="RefSeq" id="WP_011816799.1">
    <property type="nucleotide sequence ID" value="NC_008800.1"/>
</dbReference>
<dbReference type="RefSeq" id="YP_001007097.1">
    <property type="nucleotide sequence ID" value="NC_008800.1"/>
</dbReference>
<dbReference type="SMR" id="A1JS71"/>
<dbReference type="KEGG" id="yen:YE2909"/>
<dbReference type="PATRIC" id="fig|393305.7.peg.3093"/>
<dbReference type="eggNOG" id="COG2706">
    <property type="taxonomic scope" value="Bacteria"/>
</dbReference>
<dbReference type="HOGENOM" id="CLU_038716_2_0_6"/>
<dbReference type="OrthoDB" id="9790815at2"/>
<dbReference type="UniPathway" id="UPA00115">
    <property type="reaction ID" value="UER00409"/>
</dbReference>
<dbReference type="Proteomes" id="UP000000642">
    <property type="component" value="Chromosome"/>
</dbReference>
<dbReference type="GO" id="GO:0005829">
    <property type="term" value="C:cytosol"/>
    <property type="evidence" value="ECO:0007669"/>
    <property type="project" value="TreeGrafter"/>
</dbReference>
<dbReference type="GO" id="GO:0017057">
    <property type="term" value="F:6-phosphogluconolactonase activity"/>
    <property type="evidence" value="ECO:0007669"/>
    <property type="project" value="UniProtKB-UniRule"/>
</dbReference>
<dbReference type="GO" id="GO:0006006">
    <property type="term" value="P:glucose metabolic process"/>
    <property type="evidence" value="ECO:0007669"/>
    <property type="project" value="UniProtKB-KW"/>
</dbReference>
<dbReference type="GO" id="GO:0009051">
    <property type="term" value="P:pentose-phosphate shunt, oxidative branch"/>
    <property type="evidence" value="ECO:0007669"/>
    <property type="project" value="UniProtKB-UniRule"/>
</dbReference>
<dbReference type="Gene3D" id="2.130.10.10">
    <property type="entry name" value="YVTN repeat-like/Quinoprotein amine dehydrogenase"/>
    <property type="match status" value="1"/>
</dbReference>
<dbReference type="HAMAP" id="MF_01605">
    <property type="entry name" value="6P_gluconolactonase"/>
    <property type="match status" value="1"/>
</dbReference>
<dbReference type="InterPro" id="IPR022528">
    <property type="entry name" value="6-phosphogluconolactonase_YbhE"/>
</dbReference>
<dbReference type="InterPro" id="IPR050282">
    <property type="entry name" value="Cycloisomerase_2"/>
</dbReference>
<dbReference type="InterPro" id="IPR019405">
    <property type="entry name" value="Lactonase_7-beta_prop"/>
</dbReference>
<dbReference type="InterPro" id="IPR011045">
    <property type="entry name" value="N2O_reductase_N"/>
</dbReference>
<dbReference type="InterPro" id="IPR015943">
    <property type="entry name" value="WD40/YVTN_repeat-like_dom_sf"/>
</dbReference>
<dbReference type="NCBIfam" id="NF008258">
    <property type="entry name" value="PRK11028.1"/>
    <property type="match status" value="1"/>
</dbReference>
<dbReference type="PANTHER" id="PTHR30344:SF1">
    <property type="entry name" value="6-PHOSPHOGLUCONOLACTONASE"/>
    <property type="match status" value="1"/>
</dbReference>
<dbReference type="PANTHER" id="PTHR30344">
    <property type="entry name" value="6-PHOSPHOGLUCONOLACTONASE-RELATED"/>
    <property type="match status" value="1"/>
</dbReference>
<dbReference type="Pfam" id="PF10282">
    <property type="entry name" value="Lactonase"/>
    <property type="match status" value="1"/>
</dbReference>
<dbReference type="SUPFAM" id="SSF50974">
    <property type="entry name" value="Nitrous oxide reductase, N-terminal domain"/>
    <property type="match status" value="1"/>
</dbReference>
<comment type="function">
    <text evidence="1">Catalyzes the hydrolysis of 6-phosphogluconolactone to 6-phosphogluconate.</text>
</comment>
<comment type="catalytic activity">
    <reaction evidence="1">
        <text>6-phospho-D-glucono-1,5-lactone + H2O = 6-phospho-D-gluconate + H(+)</text>
        <dbReference type="Rhea" id="RHEA:12556"/>
        <dbReference type="ChEBI" id="CHEBI:15377"/>
        <dbReference type="ChEBI" id="CHEBI:15378"/>
        <dbReference type="ChEBI" id="CHEBI:57955"/>
        <dbReference type="ChEBI" id="CHEBI:58759"/>
        <dbReference type="EC" id="3.1.1.31"/>
    </reaction>
</comment>
<comment type="pathway">
    <text evidence="1">Carbohydrate degradation; pentose phosphate pathway; D-ribulose 5-phosphate from D-glucose 6-phosphate (oxidative stage): step 2/3.</text>
</comment>
<comment type="similarity">
    <text evidence="1">Belongs to the cycloisomerase 2 family.</text>
</comment>
<gene>
    <name evidence="1" type="primary">pgl</name>
    <name type="ordered locus">YE2909</name>
</gene>
<feature type="chain" id="PRO_0000291474" description="6-phosphogluconolactonase">
    <location>
        <begin position="1"/>
        <end position="333"/>
    </location>
</feature>
<keyword id="KW-0119">Carbohydrate metabolism</keyword>
<keyword id="KW-0313">Glucose metabolism</keyword>
<keyword id="KW-0378">Hydrolase</keyword>
<protein>
    <recommendedName>
        <fullName evidence="1">6-phosphogluconolactonase</fullName>
        <shortName evidence="1">6-P-gluconolactonase</shortName>
        <ecNumber evidence="1">3.1.1.31</ecNumber>
    </recommendedName>
</protein>
<organism>
    <name type="scientific">Yersinia enterocolitica serotype O:8 / biotype 1B (strain NCTC 13174 / 8081)</name>
    <dbReference type="NCBI Taxonomy" id="393305"/>
    <lineage>
        <taxon>Bacteria</taxon>
        <taxon>Pseudomonadati</taxon>
        <taxon>Pseudomonadota</taxon>
        <taxon>Gammaproteobacteria</taxon>
        <taxon>Enterobacterales</taxon>
        <taxon>Yersiniaceae</taxon>
        <taxon>Yersinia</taxon>
    </lineage>
</organism>
<name>6PGL_YERE8</name>
<reference key="1">
    <citation type="journal article" date="2006" name="PLoS Genet.">
        <title>The complete genome sequence and comparative genome analysis of the high pathogenicity Yersinia enterocolitica strain 8081.</title>
        <authorList>
            <person name="Thomson N.R."/>
            <person name="Howard S."/>
            <person name="Wren B.W."/>
            <person name="Holden M.T.G."/>
            <person name="Crossman L."/>
            <person name="Challis G.L."/>
            <person name="Churcher C."/>
            <person name="Mungall K."/>
            <person name="Brooks K."/>
            <person name="Chillingworth T."/>
            <person name="Feltwell T."/>
            <person name="Abdellah Z."/>
            <person name="Hauser H."/>
            <person name="Jagels K."/>
            <person name="Maddison M."/>
            <person name="Moule S."/>
            <person name="Sanders M."/>
            <person name="Whitehead S."/>
            <person name="Quail M.A."/>
            <person name="Dougan G."/>
            <person name="Parkhill J."/>
            <person name="Prentice M.B."/>
        </authorList>
    </citation>
    <scope>NUCLEOTIDE SEQUENCE [LARGE SCALE GENOMIC DNA]</scope>
    <source>
        <strain>NCTC 13174 / 8081</strain>
    </source>
</reference>
<accession>A1JS71</accession>
<sequence>MKQVVYVASPDSQQIHVWQLGSTGELTLLQTVEVPGQVQPMTINPNQRHLYVGVRPDFGIVSYNIADDGTLTAAGMAPLPGSPTHIGTDLQGRFLFSASYSFNCVSISPIDEHGVVQTPIQQLNDLPAPHSANIDPTNQILLVPCLKEDKVRLFDLSAEGKLTPHAQSDVTVAAGAGPRHMAFHPNQQVAYCVNELNSSVDVYQISNNGQEYKIIQTLDAMPADFTDTCWAADIHITPNGRHLYISDRTASLLGIFSVSEDGREIALVGHHQTEAQPRGFNIDHNGQFLISSGQKSDHIEVYRIDQISGELTTLKRYPVGKGPMWVSILAPRA</sequence>
<proteinExistence type="inferred from homology"/>
<evidence type="ECO:0000255" key="1">
    <source>
        <dbReference type="HAMAP-Rule" id="MF_01605"/>
    </source>
</evidence>